<organism>
    <name type="scientific">Lactobacillus acidophilus (strain ATCC 700396 / NCK56 / N2 / NCFM)</name>
    <dbReference type="NCBI Taxonomy" id="272621"/>
    <lineage>
        <taxon>Bacteria</taxon>
        <taxon>Bacillati</taxon>
        <taxon>Bacillota</taxon>
        <taxon>Bacilli</taxon>
        <taxon>Lactobacillales</taxon>
        <taxon>Lactobacillaceae</taxon>
        <taxon>Lactobacillus</taxon>
    </lineage>
</organism>
<gene>
    <name evidence="1" type="primary">efp2</name>
    <name type="ordered locus">LBA1335</name>
</gene>
<sequence>MTMISVNEFKNGLTIQYNNDLWRIVEFQHVKPGKGSAFVRSKLKSLRTGAVQEYTFRSTAKVETADIQTKSMQYLYNDGSSYVFMDTSTYDQLAIPNEQIGDEANYLLENMVVSVITHEGETLGIQLPNTVDLKVAKTEPNIKGDTSSGGGKPATMETGLVVNVPFFINEGDVLTINTSDGTYVSRANK</sequence>
<accession>Q5FJG2</accession>
<name>EFP2_LACAC</name>
<proteinExistence type="inferred from homology"/>
<protein>
    <recommendedName>
        <fullName evidence="1">Elongation factor P 2</fullName>
        <shortName evidence="1">EF-P 2</shortName>
    </recommendedName>
</protein>
<reference key="1">
    <citation type="journal article" date="2005" name="Proc. Natl. Acad. Sci. U.S.A.">
        <title>Complete genome sequence of the probiotic lactic acid bacterium Lactobacillus acidophilus NCFM.</title>
        <authorList>
            <person name="Altermann E."/>
            <person name="Russell W.M."/>
            <person name="Azcarate-Peril M.A."/>
            <person name="Barrangou R."/>
            <person name="Buck B.L."/>
            <person name="McAuliffe O."/>
            <person name="Souther N."/>
            <person name="Dobson A."/>
            <person name="Duong T."/>
            <person name="Callanan M."/>
            <person name="Lick S."/>
            <person name="Hamrick A."/>
            <person name="Cano R."/>
            <person name="Klaenhammer T.R."/>
        </authorList>
    </citation>
    <scope>NUCLEOTIDE SEQUENCE [LARGE SCALE GENOMIC DNA]</scope>
    <source>
        <strain>ATCC 700396 / NCK56 / N2 / NCFM</strain>
    </source>
</reference>
<dbReference type="EMBL" id="CP000033">
    <property type="protein sequence ID" value="AAV43162.1"/>
    <property type="molecule type" value="Genomic_DNA"/>
</dbReference>
<dbReference type="RefSeq" id="YP_194193.1">
    <property type="nucleotide sequence ID" value="NC_006814.3"/>
</dbReference>
<dbReference type="SMR" id="Q5FJG2"/>
<dbReference type="STRING" id="272621.LBA1335"/>
<dbReference type="KEGG" id="lac:LBA1335"/>
<dbReference type="PATRIC" id="fig|272621.13.peg.1263"/>
<dbReference type="eggNOG" id="COG0231">
    <property type="taxonomic scope" value="Bacteria"/>
</dbReference>
<dbReference type="HOGENOM" id="CLU_074944_0_1_9"/>
<dbReference type="OrthoDB" id="9801844at2"/>
<dbReference type="BioCyc" id="LACI272621:G1G49-1312-MONOMER"/>
<dbReference type="UniPathway" id="UPA00345"/>
<dbReference type="Proteomes" id="UP000006381">
    <property type="component" value="Chromosome"/>
</dbReference>
<dbReference type="GO" id="GO:0005737">
    <property type="term" value="C:cytoplasm"/>
    <property type="evidence" value="ECO:0007669"/>
    <property type="project" value="UniProtKB-SubCell"/>
</dbReference>
<dbReference type="GO" id="GO:0003746">
    <property type="term" value="F:translation elongation factor activity"/>
    <property type="evidence" value="ECO:0007669"/>
    <property type="project" value="UniProtKB-UniRule"/>
</dbReference>
<dbReference type="GO" id="GO:0043043">
    <property type="term" value="P:peptide biosynthetic process"/>
    <property type="evidence" value="ECO:0007669"/>
    <property type="project" value="InterPro"/>
</dbReference>
<dbReference type="CDD" id="cd04470">
    <property type="entry name" value="S1_EF-P_repeat_1"/>
    <property type="match status" value="1"/>
</dbReference>
<dbReference type="CDD" id="cd05794">
    <property type="entry name" value="S1_EF-P_repeat_2"/>
    <property type="match status" value="1"/>
</dbReference>
<dbReference type="FunFam" id="2.30.30.30:FF:000003">
    <property type="entry name" value="Elongation factor P"/>
    <property type="match status" value="1"/>
</dbReference>
<dbReference type="FunFam" id="2.40.50.140:FF:000004">
    <property type="entry name" value="Elongation factor P"/>
    <property type="match status" value="1"/>
</dbReference>
<dbReference type="FunFam" id="2.40.50.140:FF:000009">
    <property type="entry name" value="Elongation factor P"/>
    <property type="match status" value="1"/>
</dbReference>
<dbReference type="Gene3D" id="2.30.30.30">
    <property type="match status" value="1"/>
</dbReference>
<dbReference type="Gene3D" id="2.40.50.140">
    <property type="entry name" value="Nucleic acid-binding proteins"/>
    <property type="match status" value="2"/>
</dbReference>
<dbReference type="HAMAP" id="MF_00141">
    <property type="entry name" value="EF_P"/>
    <property type="match status" value="1"/>
</dbReference>
<dbReference type="InterPro" id="IPR015365">
    <property type="entry name" value="Elong-fact-P_C"/>
</dbReference>
<dbReference type="InterPro" id="IPR012340">
    <property type="entry name" value="NA-bd_OB-fold"/>
</dbReference>
<dbReference type="InterPro" id="IPR014722">
    <property type="entry name" value="Rib_uL2_dom2"/>
</dbReference>
<dbReference type="InterPro" id="IPR020599">
    <property type="entry name" value="Transl_elong_fac_P/YeiP"/>
</dbReference>
<dbReference type="InterPro" id="IPR013185">
    <property type="entry name" value="Transl_elong_KOW-like"/>
</dbReference>
<dbReference type="InterPro" id="IPR001059">
    <property type="entry name" value="Transl_elong_P/YeiP_cen"/>
</dbReference>
<dbReference type="InterPro" id="IPR013852">
    <property type="entry name" value="Transl_elong_P/YeiP_CS"/>
</dbReference>
<dbReference type="InterPro" id="IPR011768">
    <property type="entry name" value="Transl_elongation_fac_P"/>
</dbReference>
<dbReference type="InterPro" id="IPR008991">
    <property type="entry name" value="Translation_prot_SH3-like_sf"/>
</dbReference>
<dbReference type="NCBIfam" id="TIGR00038">
    <property type="entry name" value="efp"/>
    <property type="match status" value="1"/>
</dbReference>
<dbReference type="NCBIfam" id="NF001810">
    <property type="entry name" value="PRK00529.1"/>
    <property type="match status" value="1"/>
</dbReference>
<dbReference type="PANTHER" id="PTHR30053">
    <property type="entry name" value="ELONGATION FACTOR P"/>
    <property type="match status" value="1"/>
</dbReference>
<dbReference type="PANTHER" id="PTHR30053:SF12">
    <property type="entry name" value="ELONGATION FACTOR P (EF-P) FAMILY PROTEIN"/>
    <property type="match status" value="1"/>
</dbReference>
<dbReference type="Pfam" id="PF01132">
    <property type="entry name" value="EFP"/>
    <property type="match status" value="1"/>
</dbReference>
<dbReference type="Pfam" id="PF08207">
    <property type="entry name" value="EFP_N"/>
    <property type="match status" value="1"/>
</dbReference>
<dbReference type="Pfam" id="PF09285">
    <property type="entry name" value="Elong-fact-P_C"/>
    <property type="match status" value="1"/>
</dbReference>
<dbReference type="PIRSF" id="PIRSF005901">
    <property type="entry name" value="EF-P"/>
    <property type="match status" value="1"/>
</dbReference>
<dbReference type="SMART" id="SM01185">
    <property type="entry name" value="EFP"/>
    <property type="match status" value="1"/>
</dbReference>
<dbReference type="SMART" id="SM00841">
    <property type="entry name" value="Elong-fact-P_C"/>
    <property type="match status" value="1"/>
</dbReference>
<dbReference type="SUPFAM" id="SSF50249">
    <property type="entry name" value="Nucleic acid-binding proteins"/>
    <property type="match status" value="2"/>
</dbReference>
<dbReference type="SUPFAM" id="SSF50104">
    <property type="entry name" value="Translation proteins SH3-like domain"/>
    <property type="match status" value="1"/>
</dbReference>
<dbReference type="PROSITE" id="PS01275">
    <property type="entry name" value="EFP"/>
    <property type="match status" value="1"/>
</dbReference>
<feature type="chain" id="PRO_0000094264" description="Elongation factor P 2">
    <location>
        <begin position="1"/>
        <end position="189"/>
    </location>
</feature>
<evidence type="ECO:0000255" key="1">
    <source>
        <dbReference type="HAMAP-Rule" id="MF_00141"/>
    </source>
</evidence>
<keyword id="KW-0963">Cytoplasm</keyword>
<keyword id="KW-0251">Elongation factor</keyword>
<keyword id="KW-0648">Protein biosynthesis</keyword>
<keyword id="KW-1185">Reference proteome</keyword>
<comment type="function">
    <text evidence="1">Involved in peptide bond synthesis. Stimulates efficient translation and peptide-bond synthesis on native or reconstituted 70S ribosomes in vitro. Probably functions indirectly by altering the affinity of the ribosome for aminoacyl-tRNA, thus increasing their reactivity as acceptors for peptidyl transferase.</text>
</comment>
<comment type="pathway">
    <text evidence="1">Protein biosynthesis; polypeptide chain elongation.</text>
</comment>
<comment type="subcellular location">
    <subcellularLocation>
        <location evidence="1">Cytoplasm</location>
    </subcellularLocation>
</comment>
<comment type="similarity">
    <text evidence="1">Belongs to the elongation factor P family.</text>
</comment>